<keyword id="KW-0378">Hydrolase</keyword>
<keyword id="KW-0479">Metal-binding</keyword>
<keyword id="KW-0665">Pyrimidine biosynthesis</keyword>
<keyword id="KW-0862">Zinc</keyword>
<proteinExistence type="inferred from homology"/>
<evidence type="ECO:0000255" key="1">
    <source>
        <dbReference type="HAMAP-Rule" id="MF_00219"/>
    </source>
</evidence>
<gene>
    <name evidence="1" type="primary">pyrC</name>
    <name type="ordered locus">Pfl01_4519</name>
</gene>
<protein>
    <recommendedName>
        <fullName evidence="1">Dihydroorotase</fullName>
        <shortName evidence="1">DHOase</shortName>
        <ecNumber evidence="1">3.5.2.3</ecNumber>
    </recommendedName>
</protein>
<organism>
    <name type="scientific">Pseudomonas fluorescens (strain Pf0-1)</name>
    <dbReference type="NCBI Taxonomy" id="205922"/>
    <lineage>
        <taxon>Bacteria</taxon>
        <taxon>Pseudomonadati</taxon>
        <taxon>Pseudomonadota</taxon>
        <taxon>Gammaproteobacteria</taxon>
        <taxon>Pseudomonadales</taxon>
        <taxon>Pseudomonadaceae</taxon>
        <taxon>Pseudomonas</taxon>
    </lineage>
</organism>
<name>PYRC_PSEPF</name>
<comment type="function">
    <text evidence="1">Catalyzes the reversible cyclization of carbamoyl aspartate to dihydroorotate.</text>
</comment>
<comment type="catalytic activity">
    <reaction evidence="1">
        <text>(S)-dihydroorotate + H2O = N-carbamoyl-L-aspartate + H(+)</text>
        <dbReference type="Rhea" id="RHEA:24296"/>
        <dbReference type="ChEBI" id="CHEBI:15377"/>
        <dbReference type="ChEBI" id="CHEBI:15378"/>
        <dbReference type="ChEBI" id="CHEBI:30864"/>
        <dbReference type="ChEBI" id="CHEBI:32814"/>
        <dbReference type="EC" id="3.5.2.3"/>
    </reaction>
</comment>
<comment type="cofactor">
    <cofactor evidence="1">
        <name>Zn(2+)</name>
        <dbReference type="ChEBI" id="CHEBI:29105"/>
    </cofactor>
    <text evidence="1">Binds 2 Zn(2+) ions per subunit.</text>
</comment>
<comment type="pathway">
    <text evidence="1">Pyrimidine metabolism; UMP biosynthesis via de novo pathway; (S)-dihydroorotate from bicarbonate: step 3/3.</text>
</comment>
<comment type="subunit">
    <text evidence="1">Homodimer.</text>
</comment>
<comment type="similarity">
    <text evidence="1">Belongs to the metallo-dependent hydrolases superfamily. DHOase family. Class II DHOase subfamily.</text>
</comment>
<feature type="chain" id="PRO_1000024038" description="Dihydroorotase">
    <location>
        <begin position="1"/>
        <end position="348"/>
    </location>
</feature>
<feature type="active site" evidence="1">
    <location>
        <position position="248"/>
    </location>
</feature>
<feature type="binding site" evidence="1">
    <location>
        <position position="14"/>
    </location>
    <ligand>
        <name>Zn(2+)</name>
        <dbReference type="ChEBI" id="CHEBI:29105"/>
        <label>1</label>
    </ligand>
</feature>
<feature type="binding site" evidence="1">
    <location>
        <begin position="16"/>
        <end position="18"/>
    </location>
    <ligand>
        <name>substrate</name>
    </ligand>
</feature>
<feature type="binding site" evidence="1">
    <location>
        <position position="16"/>
    </location>
    <ligand>
        <name>Zn(2+)</name>
        <dbReference type="ChEBI" id="CHEBI:29105"/>
        <label>1</label>
    </ligand>
</feature>
<feature type="binding site" evidence="1">
    <location>
        <position position="42"/>
    </location>
    <ligand>
        <name>substrate</name>
    </ligand>
</feature>
<feature type="binding site" description="via carbamate group" evidence="1">
    <location>
        <position position="100"/>
    </location>
    <ligand>
        <name>Zn(2+)</name>
        <dbReference type="ChEBI" id="CHEBI:29105"/>
        <label>1</label>
    </ligand>
</feature>
<feature type="binding site" description="via carbamate group" evidence="1">
    <location>
        <position position="100"/>
    </location>
    <ligand>
        <name>Zn(2+)</name>
        <dbReference type="ChEBI" id="CHEBI:29105"/>
        <label>2</label>
    </ligand>
</feature>
<feature type="binding site" evidence="1">
    <location>
        <position position="137"/>
    </location>
    <ligand>
        <name>substrate</name>
    </ligand>
</feature>
<feature type="binding site" evidence="1">
    <location>
        <position position="137"/>
    </location>
    <ligand>
        <name>Zn(2+)</name>
        <dbReference type="ChEBI" id="CHEBI:29105"/>
        <label>2</label>
    </ligand>
</feature>
<feature type="binding site" evidence="1">
    <location>
        <position position="175"/>
    </location>
    <ligand>
        <name>Zn(2+)</name>
        <dbReference type="ChEBI" id="CHEBI:29105"/>
        <label>2</label>
    </ligand>
</feature>
<feature type="binding site" evidence="1">
    <location>
        <position position="220"/>
    </location>
    <ligand>
        <name>substrate</name>
    </ligand>
</feature>
<feature type="binding site" evidence="1">
    <location>
        <position position="248"/>
    </location>
    <ligand>
        <name>Zn(2+)</name>
        <dbReference type="ChEBI" id="CHEBI:29105"/>
        <label>1</label>
    </ligand>
</feature>
<feature type="binding site" evidence="1">
    <location>
        <position position="252"/>
    </location>
    <ligand>
        <name>substrate</name>
    </ligand>
</feature>
<feature type="binding site" evidence="1">
    <location>
        <position position="264"/>
    </location>
    <ligand>
        <name>substrate</name>
    </ligand>
</feature>
<feature type="modified residue" description="N6-carboxylysine" evidence="1">
    <location>
        <position position="100"/>
    </location>
</feature>
<accession>Q3K7J8</accession>
<sequence>MSDRLTLLRPDDWHIHLRDGAVLTNTVADVARTFGRAIIMPNLVPPVRNAAEADGYRQRILAARPAGSRFEPLMVLYLTDRTQPEEIREAKASGFVHAAKLYPAGATTNSDSGVTSIDKIFPVLEAMAEAGMPLLIHGEVTRGDVDVFDREKIFIDEHMRRVVERFPTLKVVFEHITTGDAVQFVNEASANVGATITAHHLLYNRNHMLVGGIRPHFYCLPILKRNTHQEALLDAATSGSAKFFLGTDSAPHAQHAKEAACGCAGCYTAYAAIELYAEAFEQRNALDKLEAFASLNGPRFYGLPANTDRITLVRDEWTAPTSLPFGELTVIPLRAGEKLRWRLLEEHA</sequence>
<reference key="1">
    <citation type="journal article" date="2009" name="Genome Biol.">
        <title>Genomic and genetic analyses of diversity and plant interactions of Pseudomonas fluorescens.</title>
        <authorList>
            <person name="Silby M.W."/>
            <person name="Cerdeno-Tarraga A.M."/>
            <person name="Vernikos G.S."/>
            <person name="Giddens S.R."/>
            <person name="Jackson R.W."/>
            <person name="Preston G.M."/>
            <person name="Zhang X.-X."/>
            <person name="Moon C.D."/>
            <person name="Gehrig S.M."/>
            <person name="Godfrey S.A.C."/>
            <person name="Knight C.G."/>
            <person name="Malone J.G."/>
            <person name="Robinson Z."/>
            <person name="Spiers A.J."/>
            <person name="Harris S."/>
            <person name="Challis G.L."/>
            <person name="Yaxley A.M."/>
            <person name="Harris D."/>
            <person name="Seeger K."/>
            <person name="Murphy L."/>
            <person name="Rutter S."/>
            <person name="Squares R."/>
            <person name="Quail M.A."/>
            <person name="Saunders E."/>
            <person name="Mavromatis K."/>
            <person name="Brettin T.S."/>
            <person name="Bentley S.D."/>
            <person name="Hothersall J."/>
            <person name="Stephens E."/>
            <person name="Thomas C.M."/>
            <person name="Parkhill J."/>
            <person name="Levy S.B."/>
            <person name="Rainey P.B."/>
            <person name="Thomson N.R."/>
        </authorList>
    </citation>
    <scope>NUCLEOTIDE SEQUENCE [LARGE SCALE GENOMIC DNA]</scope>
    <source>
        <strain>Pf0-1</strain>
    </source>
</reference>
<dbReference type="EC" id="3.5.2.3" evidence="1"/>
<dbReference type="EMBL" id="CP000094">
    <property type="protein sequence ID" value="ABA76256.1"/>
    <property type="molecule type" value="Genomic_DNA"/>
</dbReference>
<dbReference type="RefSeq" id="WP_011335738.1">
    <property type="nucleotide sequence ID" value="NC_007492.2"/>
</dbReference>
<dbReference type="SMR" id="Q3K7J8"/>
<dbReference type="MEROPS" id="M38.A02"/>
<dbReference type="KEGG" id="pfo:Pfl01_4519"/>
<dbReference type="eggNOG" id="COG0418">
    <property type="taxonomic scope" value="Bacteria"/>
</dbReference>
<dbReference type="HOGENOM" id="CLU_041558_1_0_6"/>
<dbReference type="UniPathway" id="UPA00070">
    <property type="reaction ID" value="UER00117"/>
</dbReference>
<dbReference type="Proteomes" id="UP000002704">
    <property type="component" value="Chromosome"/>
</dbReference>
<dbReference type="GO" id="GO:0005829">
    <property type="term" value="C:cytosol"/>
    <property type="evidence" value="ECO:0007669"/>
    <property type="project" value="TreeGrafter"/>
</dbReference>
<dbReference type="GO" id="GO:0004151">
    <property type="term" value="F:dihydroorotase activity"/>
    <property type="evidence" value="ECO:0007669"/>
    <property type="project" value="UniProtKB-UniRule"/>
</dbReference>
<dbReference type="GO" id="GO:0008270">
    <property type="term" value="F:zinc ion binding"/>
    <property type="evidence" value="ECO:0007669"/>
    <property type="project" value="UniProtKB-UniRule"/>
</dbReference>
<dbReference type="GO" id="GO:0006207">
    <property type="term" value="P:'de novo' pyrimidine nucleobase biosynthetic process"/>
    <property type="evidence" value="ECO:0007669"/>
    <property type="project" value="TreeGrafter"/>
</dbReference>
<dbReference type="GO" id="GO:0044205">
    <property type="term" value="P:'de novo' UMP biosynthetic process"/>
    <property type="evidence" value="ECO:0007669"/>
    <property type="project" value="UniProtKB-UniRule"/>
</dbReference>
<dbReference type="CDD" id="cd01294">
    <property type="entry name" value="DHOase"/>
    <property type="match status" value="1"/>
</dbReference>
<dbReference type="FunFam" id="3.20.20.140:FF:000006">
    <property type="entry name" value="Dihydroorotase"/>
    <property type="match status" value="1"/>
</dbReference>
<dbReference type="Gene3D" id="3.20.20.140">
    <property type="entry name" value="Metal-dependent hydrolases"/>
    <property type="match status" value="1"/>
</dbReference>
<dbReference type="HAMAP" id="MF_00219">
    <property type="entry name" value="PyrC_classII"/>
    <property type="match status" value="1"/>
</dbReference>
<dbReference type="InterPro" id="IPR006680">
    <property type="entry name" value="Amidohydro-rel"/>
</dbReference>
<dbReference type="InterPro" id="IPR004721">
    <property type="entry name" value="DHOdimr"/>
</dbReference>
<dbReference type="InterPro" id="IPR002195">
    <property type="entry name" value="Dihydroorotase_CS"/>
</dbReference>
<dbReference type="InterPro" id="IPR032466">
    <property type="entry name" value="Metal_Hydrolase"/>
</dbReference>
<dbReference type="NCBIfam" id="TIGR00856">
    <property type="entry name" value="pyrC_dimer"/>
    <property type="match status" value="1"/>
</dbReference>
<dbReference type="PANTHER" id="PTHR43137">
    <property type="entry name" value="DIHYDROOROTASE"/>
    <property type="match status" value="1"/>
</dbReference>
<dbReference type="PANTHER" id="PTHR43137:SF1">
    <property type="entry name" value="DIHYDROOROTASE"/>
    <property type="match status" value="1"/>
</dbReference>
<dbReference type="Pfam" id="PF01979">
    <property type="entry name" value="Amidohydro_1"/>
    <property type="match status" value="1"/>
</dbReference>
<dbReference type="PIRSF" id="PIRSF001237">
    <property type="entry name" value="DHOdimr"/>
    <property type="match status" value="1"/>
</dbReference>
<dbReference type="SUPFAM" id="SSF51556">
    <property type="entry name" value="Metallo-dependent hydrolases"/>
    <property type="match status" value="1"/>
</dbReference>
<dbReference type="PROSITE" id="PS00482">
    <property type="entry name" value="DIHYDROOROTASE_1"/>
    <property type="match status" value="1"/>
</dbReference>
<dbReference type="PROSITE" id="PS00483">
    <property type="entry name" value="DIHYDROOROTASE_2"/>
    <property type="match status" value="1"/>
</dbReference>